<comment type="function">
    <text>Catalyzes the oxidation of various aldopyranoses and disaccharides on carbon-2 to the corresponding 2-keto sugars concomitant with the reduction of O(2) to H(2)O(2). Plays an important role in lignin degradation of wood rot fungi by supplying the essential cosubstrate H(2)O(2) for the ligninolytic peroxidases, lignin peroxidase and manganese-dependent peroxidase. The preferred substrate is D-glucose which is converted to 2-dehydro-D-glucose, an intermediate of a secondary metabolic pathway leading to the antibiotic cortalcerone. Also acts on D-xylose, together with D-glucose the major sugars derived from wood, on L-sorbose, D-galactose and 1,5-anhydroglucitol, a diagnostic marker of diabetes mellitus.</text>
</comment>
<comment type="catalytic activity">
    <reaction>
        <text>D-glucose + O2 = 2-dehydro-D-glucose + H2O2</text>
        <dbReference type="Rhea" id="RHEA:10552"/>
        <dbReference type="ChEBI" id="CHEBI:4167"/>
        <dbReference type="ChEBI" id="CHEBI:15379"/>
        <dbReference type="ChEBI" id="CHEBI:16240"/>
        <dbReference type="ChEBI" id="CHEBI:16609"/>
        <dbReference type="EC" id="1.1.3.10"/>
    </reaction>
</comment>
<comment type="cofactor">
    <cofactor evidence="1">
        <name>FAD</name>
        <dbReference type="ChEBI" id="CHEBI:57692"/>
    </cofactor>
    <text evidence="1">Binds 1 FAD covalently per subunit.</text>
</comment>
<comment type="biophysicochemical properties">
    <phDependence>
        <text evidence="3">Optimum pH is 6. Active and stable from pH 3 to 9.</text>
    </phDependence>
    <temperatureDependence>
        <text evidence="3">Optimum temperature is 30-50 degrees Celsius. Active and thermostable for 30 minutes up to 55 degrees Celsius.</text>
    </temperatureDependence>
</comment>
<comment type="subunit">
    <text evidence="1">Homotetramer.</text>
</comment>
<comment type="subcellular location">
    <subcellularLocation>
        <location evidence="1">Periplasm</location>
    </subcellularLocation>
    <text evidence="1">Hyphal periplasmic space.</text>
</comment>
<comment type="similarity">
    <text evidence="4">Belongs to the GMC oxidoreductase family.</text>
</comment>
<protein>
    <recommendedName>
        <fullName>Pyranose 2-oxidase</fullName>
        <shortName>P2Ox</shortName>
        <shortName>POD</shortName>
        <shortName>POx</shortName>
        <shortName>PROD</shortName>
        <shortName>Pyranose oxidase</shortName>
        <ecNumber>1.1.3.10</ecNumber>
    </recommendedName>
    <alternativeName>
        <fullName>FAD-oxidoreductase</fullName>
    </alternativeName>
    <alternativeName>
        <fullName>Glucose 2-oxidase</fullName>
    </alternativeName>
    <alternativeName>
        <fullName>Pyranose:oxygen 2-oxidoreductase</fullName>
    </alternativeName>
</protein>
<accession>P59097</accession>
<reference key="1">
    <citation type="patent" date="2000-11-14" number="US6146865">
        <title>Nucleic acids encoding polypeptides having pyranose oxidase activity.</title>
        <authorList>
            <person name="Christensen S."/>
            <person name="Lassen S.F."/>
            <person name="Schneider P."/>
        </authorList>
    </citation>
    <scope>NUCLEOTIDE SEQUENCE [MRNA]</scope>
    <scope>PROTEIN SEQUENCE OF 38-62; 232-254; 405-412; 486-491 AND 575-596</scope>
    <scope>CHARACTERIZATION</scope>
    <scope>BIOPHYSICOCHEMICAL PROPERTIES</scope>
    <source>
        <strain>DSM 2987</strain>
    </source>
</reference>
<proteinExistence type="evidence at protein level"/>
<dbReference type="EC" id="1.1.3.10"/>
<dbReference type="SMR" id="P59097"/>
<dbReference type="GO" id="GO:0042597">
    <property type="term" value="C:periplasmic space"/>
    <property type="evidence" value="ECO:0007669"/>
    <property type="project" value="UniProtKB-SubCell"/>
</dbReference>
<dbReference type="GO" id="GO:0050660">
    <property type="term" value="F:flavin adenine dinucleotide binding"/>
    <property type="evidence" value="ECO:0007669"/>
    <property type="project" value="InterPro"/>
</dbReference>
<dbReference type="GO" id="GO:0050233">
    <property type="term" value="F:pyranose oxidase activity"/>
    <property type="evidence" value="ECO:0007669"/>
    <property type="project" value="UniProtKB-EC"/>
</dbReference>
<dbReference type="Gene3D" id="3.30.1920.50">
    <property type="match status" value="1"/>
</dbReference>
<dbReference type="Gene3D" id="3.50.50.60">
    <property type="entry name" value="FAD/NAD(P)-binding domain"/>
    <property type="match status" value="2"/>
</dbReference>
<dbReference type="InterPro" id="IPR036188">
    <property type="entry name" value="FAD/NAD-bd_sf"/>
</dbReference>
<dbReference type="InterPro" id="IPR000172">
    <property type="entry name" value="GMC_OxRdtase_N"/>
</dbReference>
<dbReference type="InterPro" id="IPR007867">
    <property type="entry name" value="GMC_OxRtase_C"/>
</dbReference>
<dbReference type="InterPro" id="IPR012814">
    <property type="entry name" value="P2OX"/>
</dbReference>
<dbReference type="InterPro" id="IPR051473">
    <property type="entry name" value="P2Ox-like"/>
</dbReference>
<dbReference type="NCBIfam" id="TIGR02462">
    <property type="entry name" value="pyranose_ox"/>
    <property type="match status" value="1"/>
</dbReference>
<dbReference type="PANTHER" id="PTHR42784">
    <property type="entry name" value="PYRANOSE 2-OXIDASE"/>
    <property type="match status" value="1"/>
</dbReference>
<dbReference type="PANTHER" id="PTHR42784:SF1">
    <property type="entry name" value="PYRANOSE 2-OXIDASE"/>
    <property type="match status" value="1"/>
</dbReference>
<dbReference type="Pfam" id="PF05199">
    <property type="entry name" value="GMC_oxred_C"/>
    <property type="match status" value="1"/>
</dbReference>
<dbReference type="Pfam" id="PF00732">
    <property type="entry name" value="GMC_oxred_N"/>
    <property type="match status" value="1"/>
</dbReference>
<dbReference type="SUPFAM" id="SSF54373">
    <property type="entry name" value="FAD-linked reductases, C-terminal domain"/>
    <property type="match status" value="1"/>
</dbReference>
<dbReference type="SUPFAM" id="SSF51905">
    <property type="entry name" value="FAD/NAD(P)-binding domain"/>
    <property type="match status" value="1"/>
</dbReference>
<evidence type="ECO:0000250" key="1"/>
<evidence type="ECO:0000250" key="2">
    <source>
        <dbReference type="UniProtKB" id="E4QP00"/>
    </source>
</evidence>
<evidence type="ECO:0000269" key="3">
    <source ref="1"/>
</evidence>
<evidence type="ECO:0000305" key="4"/>
<feature type="signal peptide" evidence="1">
    <location>
        <begin position="1"/>
        <end position="28"/>
    </location>
</feature>
<feature type="propeptide" id="PRO_0000012352" evidence="3">
    <location>
        <begin position="29"/>
        <end position="37"/>
    </location>
</feature>
<feature type="chain" id="PRO_0000012353" description="Pyranose 2-oxidase">
    <location>
        <begin position="38"/>
        <end position="622"/>
    </location>
</feature>
<feature type="active site" description="Proton acceptor" evidence="2">
    <location>
        <position position="546"/>
    </location>
</feature>
<feature type="active site" evidence="1">
    <location>
        <position position="591"/>
    </location>
</feature>
<feature type="binding site" evidence="1">
    <location>
        <position position="449"/>
    </location>
    <ligand>
        <name>substrate</name>
    </ligand>
</feature>
<feature type="binding site" evidence="1">
    <location>
        <position position="451"/>
    </location>
    <ligand>
        <name>substrate</name>
    </ligand>
</feature>
<feature type="modified residue" description="Tele-8alpha-FAD histidine" evidence="1">
    <location>
        <position position="167"/>
    </location>
</feature>
<feature type="sequence conflict" description="In Ref. 1; AA sequence." evidence="4" ref="1">
    <original>T</original>
    <variation>S</variation>
    <location>
        <position position="60"/>
    </location>
</feature>
<feature type="sequence conflict" description="In Ref. 1; AA sequence." evidence="4" ref="1">
    <original>AT</original>
    <variation>FS</variation>
    <location>
        <begin position="243"/>
        <end position="244"/>
    </location>
</feature>
<keyword id="KW-0903">Direct protein sequencing</keyword>
<keyword id="KW-0274">FAD</keyword>
<keyword id="KW-0285">Flavoprotein</keyword>
<keyword id="KW-0560">Oxidoreductase</keyword>
<keyword id="KW-0574">Periplasm</keyword>
<keyword id="KW-0732">Signal</keyword>
<sequence>MSASSSDPFHSFAKTSFTSKAAKRATAHSLPPLPGPGDLPPGMNVEYDVAIVGSGPIGCTYARELVEAGFNVAMFEIGEIDSGLKIGSHKKNTVEYQKNIDKFVNVIQGQLMPVSVPVNTMVVDTLSPASWQASTFFVRNGANPEQDPLRNLSGQAVTRVVGGMSTHWTCATPRFEKLQRPLLVKNDSKADDAEWDRLYKKAESYFKTGTTQFAESIRHNLVLKKLQEEYKGVRDFQQIPLAATRQSPTFVEWSSAHTVFDLENRPNKDAPKQRFNLFPAVACTNVRRDNANSEIVGLDVRDLHGGKSITIKAKVYILTAGAVHNAQLLAASGFGQLGRPDPAKPLPSLLPYLGTHITEQTLVFCQTVMSTELINSVTADMTIVGKPGHPDYSVTYTPGNPNNKHPDWWNEKVKKHMMDHQEDPLPIPFEDPEPQVTTLFQATHPWHTQIHRDAFSYGAVQQSIDSRLIVDWRFFGRTEPKEENKLWFSDKITDAYNLRQPTFDFRFPGGREAEDMMTDMCVMSAKIGGFLPGSYPQFMEPGLVLHLGGTHRMGFDEKADKCCVDTDSRVFGFKNLFLGGCGNIPTAYAANPTLTAMSLAIKSCEYIKKNFEPSPNPVKHHN</sequence>
<gene>
    <name type="primary">P2OX</name>
</gene>
<name>P2OX_TRAHI</name>
<organism>
    <name type="scientific">Trametes hirsuta</name>
    <name type="common">White-rot fungus</name>
    <name type="synonym">Coriolus hirsutus</name>
    <dbReference type="NCBI Taxonomy" id="5327"/>
    <lineage>
        <taxon>Eukaryota</taxon>
        <taxon>Fungi</taxon>
        <taxon>Dikarya</taxon>
        <taxon>Basidiomycota</taxon>
        <taxon>Agaricomycotina</taxon>
        <taxon>Agaricomycetes</taxon>
        <taxon>Polyporales</taxon>
        <taxon>Polyporaceae</taxon>
        <taxon>Trametes</taxon>
    </lineage>
</organism>